<evidence type="ECO:0000255" key="1">
    <source>
        <dbReference type="HAMAP-Rule" id="MF_01694"/>
    </source>
</evidence>
<evidence type="ECO:0000255" key="2">
    <source>
        <dbReference type="PROSITE-ProRule" id="PRU01266"/>
    </source>
</evidence>
<organism>
    <name type="scientific">Geotalea daltonii (strain DSM 22248 / JCM 15807 / FRC-32)</name>
    <name type="common">Geobacter daltonii</name>
    <dbReference type="NCBI Taxonomy" id="316067"/>
    <lineage>
        <taxon>Bacteria</taxon>
        <taxon>Pseudomonadati</taxon>
        <taxon>Thermodesulfobacteriota</taxon>
        <taxon>Desulfuromonadia</taxon>
        <taxon>Geobacterales</taxon>
        <taxon>Geobacteraceae</taxon>
        <taxon>Geotalea</taxon>
    </lineage>
</organism>
<reference key="1">
    <citation type="submission" date="2009-01" db="EMBL/GenBank/DDBJ databases">
        <title>Complete sequence of Geobacter sp. FRC-32.</title>
        <authorList>
            <consortium name="US DOE Joint Genome Institute"/>
            <person name="Lucas S."/>
            <person name="Copeland A."/>
            <person name="Lapidus A."/>
            <person name="Glavina del Rio T."/>
            <person name="Dalin E."/>
            <person name="Tice H."/>
            <person name="Bruce D."/>
            <person name="Goodwin L."/>
            <person name="Pitluck S."/>
            <person name="Saunders E."/>
            <person name="Brettin T."/>
            <person name="Detter J.C."/>
            <person name="Han C."/>
            <person name="Larimer F."/>
            <person name="Land M."/>
            <person name="Hauser L."/>
            <person name="Kyrpides N."/>
            <person name="Ovchinnikova G."/>
            <person name="Kostka J."/>
            <person name="Richardson P."/>
        </authorList>
    </citation>
    <scope>NUCLEOTIDE SEQUENCE [LARGE SCALE GENOMIC DNA]</scope>
    <source>
        <strain>DSM 22248 / JCM 15807 / FRC-32</strain>
    </source>
</reference>
<protein>
    <recommendedName>
        <fullName evidence="1">Biotin synthase</fullName>
        <ecNumber evidence="1">2.8.1.6</ecNumber>
    </recommendedName>
</protein>
<dbReference type="EC" id="2.8.1.6" evidence="1"/>
<dbReference type="EMBL" id="CP001390">
    <property type="protein sequence ID" value="ACM21351.1"/>
    <property type="molecule type" value="Genomic_DNA"/>
</dbReference>
<dbReference type="RefSeq" id="WP_012648079.1">
    <property type="nucleotide sequence ID" value="NC_011979.1"/>
</dbReference>
<dbReference type="SMR" id="B9M305"/>
<dbReference type="STRING" id="316067.Geob_3008"/>
<dbReference type="KEGG" id="geo:Geob_3008"/>
<dbReference type="eggNOG" id="COG0502">
    <property type="taxonomic scope" value="Bacteria"/>
</dbReference>
<dbReference type="HOGENOM" id="CLU_033172_2_1_7"/>
<dbReference type="OrthoDB" id="9786826at2"/>
<dbReference type="UniPathway" id="UPA00078">
    <property type="reaction ID" value="UER00162"/>
</dbReference>
<dbReference type="Proteomes" id="UP000007721">
    <property type="component" value="Chromosome"/>
</dbReference>
<dbReference type="GO" id="GO:0051537">
    <property type="term" value="F:2 iron, 2 sulfur cluster binding"/>
    <property type="evidence" value="ECO:0007669"/>
    <property type="project" value="UniProtKB-KW"/>
</dbReference>
<dbReference type="GO" id="GO:0051539">
    <property type="term" value="F:4 iron, 4 sulfur cluster binding"/>
    <property type="evidence" value="ECO:0007669"/>
    <property type="project" value="UniProtKB-KW"/>
</dbReference>
<dbReference type="GO" id="GO:0004076">
    <property type="term" value="F:biotin synthase activity"/>
    <property type="evidence" value="ECO:0007669"/>
    <property type="project" value="UniProtKB-UniRule"/>
</dbReference>
<dbReference type="GO" id="GO:0005506">
    <property type="term" value="F:iron ion binding"/>
    <property type="evidence" value="ECO:0007669"/>
    <property type="project" value="UniProtKB-UniRule"/>
</dbReference>
<dbReference type="GO" id="GO:0009102">
    <property type="term" value="P:biotin biosynthetic process"/>
    <property type="evidence" value="ECO:0007669"/>
    <property type="project" value="UniProtKB-UniRule"/>
</dbReference>
<dbReference type="CDD" id="cd01335">
    <property type="entry name" value="Radical_SAM"/>
    <property type="match status" value="1"/>
</dbReference>
<dbReference type="FunFam" id="3.20.20.70:FF:000026">
    <property type="entry name" value="Biotin synthase"/>
    <property type="match status" value="1"/>
</dbReference>
<dbReference type="Gene3D" id="3.20.20.70">
    <property type="entry name" value="Aldolase class I"/>
    <property type="match status" value="1"/>
</dbReference>
<dbReference type="HAMAP" id="MF_01694">
    <property type="entry name" value="BioB"/>
    <property type="match status" value="1"/>
</dbReference>
<dbReference type="InterPro" id="IPR013785">
    <property type="entry name" value="Aldolase_TIM"/>
</dbReference>
<dbReference type="InterPro" id="IPR010722">
    <property type="entry name" value="BATS_dom"/>
</dbReference>
<dbReference type="InterPro" id="IPR002684">
    <property type="entry name" value="Biotin_synth/BioAB"/>
</dbReference>
<dbReference type="InterPro" id="IPR024177">
    <property type="entry name" value="Biotin_synthase"/>
</dbReference>
<dbReference type="InterPro" id="IPR006638">
    <property type="entry name" value="Elp3/MiaA/NifB-like_rSAM"/>
</dbReference>
<dbReference type="InterPro" id="IPR007197">
    <property type="entry name" value="rSAM"/>
</dbReference>
<dbReference type="NCBIfam" id="TIGR00433">
    <property type="entry name" value="bioB"/>
    <property type="match status" value="1"/>
</dbReference>
<dbReference type="PANTHER" id="PTHR22976">
    <property type="entry name" value="BIOTIN SYNTHASE"/>
    <property type="match status" value="1"/>
</dbReference>
<dbReference type="PANTHER" id="PTHR22976:SF2">
    <property type="entry name" value="BIOTIN SYNTHASE, MITOCHONDRIAL"/>
    <property type="match status" value="1"/>
</dbReference>
<dbReference type="Pfam" id="PF06968">
    <property type="entry name" value="BATS"/>
    <property type="match status" value="1"/>
</dbReference>
<dbReference type="Pfam" id="PF04055">
    <property type="entry name" value="Radical_SAM"/>
    <property type="match status" value="1"/>
</dbReference>
<dbReference type="PIRSF" id="PIRSF001619">
    <property type="entry name" value="Biotin_synth"/>
    <property type="match status" value="1"/>
</dbReference>
<dbReference type="SFLD" id="SFLDG01060">
    <property type="entry name" value="BATS_domain_containing"/>
    <property type="match status" value="1"/>
</dbReference>
<dbReference type="SFLD" id="SFLDG01278">
    <property type="entry name" value="biotin_synthase_like"/>
    <property type="match status" value="1"/>
</dbReference>
<dbReference type="SMART" id="SM00876">
    <property type="entry name" value="BATS"/>
    <property type="match status" value="1"/>
</dbReference>
<dbReference type="SMART" id="SM00729">
    <property type="entry name" value="Elp3"/>
    <property type="match status" value="1"/>
</dbReference>
<dbReference type="SUPFAM" id="SSF102114">
    <property type="entry name" value="Radical SAM enzymes"/>
    <property type="match status" value="1"/>
</dbReference>
<dbReference type="PROSITE" id="PS51918">
    <property type="entry name" value="RADICAL_SAM"/>
    <property type="match status" value="1"/>
</dbReference>
<accession>B9M305</accession>
<feature type="chain" id="PRO_0000381404" description="Biotin synthase">
    <location>
        <begin position="1"/>
        <end position="329"/>
    </location>
</feature>
<feature type="domain" description="Radical SAM core" evidence="2">
    <location>
        <begin position="48"/>
        <end position="278"/>
    </location>
</feature>
<feature type="binding site" evidence="1">
    <location>
        <position position="66"/>
    </location>
    <ligand>
        <name>[4Fe-4S] cluster</name>
        <dbReference type="ChEBI" id="CHEBI:49883"/>
        <note>4Fe-4S-S-AdoMet</note>
    </ligand>
</feature>
<feature type="binding site" evidence="1">
    <location>
        <position position="70"/>
    </location>
    <ligand>
        <name>[4Fe-4S] cluster</name>
        <dbReference type="ChEBI" id="CHEBI:49883"/>
        <note>4Fe-4S-S-AdoMet</note>
    </ligand>
</feature>
<feature type="binding site" evidence="1">
    <location>
        <position position="73"/>
    </location>
    <ligand>
        <name>[4Fe-4S] cluster</name>
        <dbReference type="ChEBI" id="CHEBI:49883"/>
        <note>4Fe-4S-S-AdoMet</note>
    </ligand>
</feature>
<feature type="binding site" evidence="1">
    <location>
        <position position="143"/>
    </location>
    <ligand>
        <name>[2Fe-2S] cluster</name>
        <dbReference type="ChEBI" id="CHEBI:190135"/>
    </ligand>
</feature>
<feature type="binding site" evidence="1">
    <location>
        <position position="203"/>
    </location>
    <ligand>
        <name>[2Fe-2S] cluster</name>
        <dbReference type="ChEBI" id="CHEBI:190135"/>
    </ligand>
</feature>
<sequence length="329" mass="36110">MKMNLEKLGERIIEGGDILVEEALELANLRGSALYPLFGAASRIKEHFVGDKVFLCSIVNAKSGRCPENCSFCAQSAHHKTDAPVYSLIDEERMVACAREAEKNGSSCYGIITSGTSIKKGEELERICNAVRRIRRETGITPSCSLGIINHETASALVEAGVETYHHNLETSRSFFPNVCTTHDYEEDVNTVRVAKKAGLKVCCGGIFGLGESVAQRIEMAYTLRELDVDSVPLNFLNPIAGTKLENAENITPMECLQTIALFRLILPTKRISICGGREKNLRDLQSWIFFAGASGTMIGNYLTTTGRAAEEDWQMLKDLNLSVASCCE</sequence>
<gene>
    <name evidence="1" type="primary">bioB</name>
    <name type="ordered locus">Geob_3008</name>
</gene>
<proteinExistence type="inferred from homology"/>
<name>BIOB_GEODF</name>
<keyword id="KW-0001">2Fe-2S</keyword>
<keyword id="KW-0004">4Fe-4S</keyword>
<keyword id="KW-0093">Biotin biosynthesis</keyword>
<keyword id="KW-0408">Iron</keyword>
<keyword id="KW-0411">Iron-sulfur</keyword>
<keyword id="KW-0479">Metal-binding</keyword>
<keyword id="KW-1185">Reference proteome</keyword>
<keyword id="KW-0949">S-adenosyl-L-methionine</keyword>
<keyword id="KW-0808">Transferase</keyword>
<comment type="function">
    <text evidence="1">Catalyzes the conversion of dethiobiotin (DTB) to biotin by the insertion of a sulfur atom into dethiobiotin via a radical-based mechanism.</text>
</comment>
<comment type="catalytic activity">
    <reaction evidence="1">
        <text>(4R,5S)-dethiobiotin + (sulfur carrier)-SH + 2 reduced [2Fe-2S]-[ferredoxin] + 2 S-adenosyl-L-methionine = (sulfur carrier)-H + biotin + 2 5'-deoxyadenosine + 2 L-methionine + 2 oxidized [2Fe-2S]-[ferredoxin]</text>
        <dbReference type="Rhea" id="RHEA:22060"/>
        <dbReference type="Rhea" id="RHEA-COMP:10000"/>
        <dbReference type="Rhea" id="RHEA-COMP:10001"/>
        <dbReference type="Rhea" id="RHEA-COMP:14737"/>
        <dbReference type="Rhea" id="RHEA-COMP:14739"/>
        <dbReference type="ChEBI" id="CHEBI:17319"/>
        <dbReference type="ChEBI" id="CHEBI:29917"/>
        <dbReference type="ChEBI" id="CHEBI:33737"/>
        <dbReference type="ChEBI" id="CHEBI:33738"/>
        <dbReference type="ChEBI" id="CHEBI:57586"/>
        <dbReference type="ChEBI" id="CHEBI:57844"/>
        <dbReference type="ChEBI" id="CHEBI:59789"/>
        <dbReference type="ChEBI" id="CHEBI:64428"/>
        <dbReference type="ChEBI" id="CHEBI:149473"/>
        <dbReference type="EC" id="2.8.1.6"/>
    </reaction>
</comment>
<comment type="cofactor">
    <cofactor evidence="1">
        <name>[4Fe-4S] cluster</name>
        <dbReference type="ChEBI" id="CHEBI:49883"/>
    </cofactor>
    <text evidence="1">Binds 1 [4Fe-4S] cluster. The cluster is coordinated with 3 cysteines and an exchangeable S-adenosyl-L-methionine.</text>
</comment>
<comment type="cofactor">
    <cofactor evidence="1">
        <name>[2Fe-2S] cluster</name>
        <dbReference type="ChEBI" id="CHEBI:190135"/>
    </cofactor>
    <text evidence="1">Binds 1 [2Fe-2S] cluster. The cluster is coordinated with 3 cysteines and 1 arginine.</text>
</comment>
<comment type="pathway">
    <text evidence="1">Cofactor biosynthesis; biotin biosynthesis; biotin from 7,8-diaminononanoate: step 2/2.</text>
</comment>
<comment type="subunit">
    <text evidence="1">Homodimer.</text>
</comment>
<comment type="similarity">
    <text evidence="1">Belongs to the radical SAM superfamily. Biotin synthase family.</text>
</comment>